<sequence>MKAKIHPKYHQAKARCACGNEFEVGSTSENIRVEICSKCHPFYTGAKGRLVDTTGRVDRFKKKYGLS</sequence>
<organism>
    <name type="scientific">Syntrophomonas wolfei subsp. wolfei (strain DSM 2245B / Goettingen)</name>
    <dbReference type="NCBI Taxonomy" id="335541"/>
    <lineage>
        <taxon>Bacteria</taxon>
        <taxon>Bacillati</taxon>
        <taxon>Bacillota</taxon>
        <taxon>Clostridia</taxon>
        <taxon>Eubacteriales</taxon>
        <taxon>Syntrophomonadaceae</taxon>
        <taxon>Syntrophomonas</taxon>
    </lineage>
</organism>
<comment type="function">
    <text evidence="1">Binds the 23S rRNA.</text>
</comment>
<comment type="cofactor">
    <cofactor evidence="1">
        <name>Zn(2+)</name>
        <dbReference type="ChEBI" id="CHEBI:29105"/>
    </cofactor>
    <text evidence="1">Binds 1 zinc ion per subunit.</text>
</comment>
<comment type="subunit">
    <text evidence="1">Part of the 50S ribosomal subunit.</text>
</comment>
<comment type="similarity">
    <text evidence="1">Belongs to the bacterial ribosomal protein bL31 family. Type A subfamily.</text>
</comment>
<keyword id="KW-0479">Metal-binding</keyword>
<keyword id="KW-1185">Reference proteome</keyword>
<keyword id="KW-0687">Ribonucleoprotein</keyword>
<keyword id="KW-0689">Ribosomal protein</keyword>
<keyword id="KW-0694">RNA-binding</keyword>
<keyword id="KW-0699">rRNA-binding</keyword>
<keyword id="KW-0862">Zinc</keyword>
<evidence type="ECO:0000255" key="1">
    <source>
        <dbReference type="HAMAP-Rule" id="MF_00501"/>
    </source>
</evidence>
<evidence type="ECO:0000305" key="2"/>
<gene>
    <name evidence="1" type="primary">rpmE</name>
    <name type="ordered locus">Swol_2399</name>
</gene>
<proteinExistence type="inferred from homology"/>
<accession>Q0AUB6</accession>
<reference key="1">
    <citation type="journal article" date="2010" name="Environ. Microbiol.">
        <title>The genome of Syntrophomonas wolfei: new insights into syntrophic metabolism and biohydrogen production.</title>
        <authorList>
            <person name="Sieber J.R."/>
            <person name="Sims D.R."/>
            <person name="Han C."/>
            <person name="Kim E."/>
            <person name="Lykidis A."/>
            <person name="Lapidus A.L."/>
            <person name="McDonnald E."/>
            <person name="Rohlin L."/>
            <person name="Culley D.E."/>
            <person name="Gunsalus R."/>
            <person name="McInerney M.J."/>
        </authorList>
    </citation>
    <scope>NUCLEOTIDE SEQUENCE [LARGE SCALE GENOMIC DNA]</scope>
    <source>
        <strain>DSM 2245B / Goettingen</strain>
    </source>
</reference>
<name>RL31_SYNWW</name>
<protein>
    <recommendedName>
        <fullName evidence="1">Large ribosomal subunit protein bL31</fullName>
    </recommendedName>
    <alternativeName>
        <fullName evidence="2">50S ribosomal protein L31</fullName>
    </alternativeName>
</protein>
<dbReference type="EMBL" id="CP000448">
    <property type="protein sequence ID" value="ABI69688.1"/>
    <property type="molecule type" value="Genomic_DNA"/>
</dbReference>
<dbReference type="RefSeq" id="WP_011641772.1">
    <property type="nucleotide sequence ID" value="NC_008346.1"/>
</dbReference>
<dbReference type="SMR" id="Q0AUB6"/>
<dbReference type="STRING" id="335541.Swol_2399"/>
<dbReference type="KEGG" id="swo:Swol_2399"/>
<dbReference type="eggNOG" id="COG0254">
    <property type="taxonomic scope" value="Bacteria"/>
</dbReference>
<dbReference type="HOGENOM" id="CLU_114306_4_3_9"/>
<dbReference type="OrthoDB" id="9803251at2"/>
<dbReference type="Proteomes" id="UP000001968">
    <property type="component" value="Chromosome"/>
</dbReference>
<dbReference type="GO" id="GO:1990904">
    <property type="term" value="C:ribonucleoprotein complex"/>
    <property type="evidence" value="ECO:0007669"/>
    <property type="project" value="UniProtKB-KW"/>
</dbReference>
<dbReference type="GO" id="GO:0005840">
    <property type="term" value="C:ribosome"/>
    <property type="evidence" value="ECO:0007669"/>
    <property type="project" value="UniProtKB-KW"/>
</dbReference>
<dbReference type="GO" id="GO:0046872">
    <property type="term" value="F:metal ion binding"/>
    <property type="evidence" value="ECO:0007669"/>
    <property type="project" value="UniProtKB-KW"/>
</dbReference>
<dbReference type="GO" id="GO:0019843">
    <property type="term" value="F:rRNA binding"/>
    <property type="evidence" value="ECO:0007669"/>
    <property type="project" value="UniProtKB-KW"/>
</dbReference>
<dbReference type="GO" id="GO:0003735">
    <property type="term" value="F:structural constituent of ribosome"/>
    <property type="evidence" value="ECO:0007669"/>
    <property type="project" value="InterPro"/>
</dbReference>
<dbReference type="GO" id="GO:0006412">
    <property type="term" value="P:translation"/>
    <property type="evidence" value="ECO:0007669"/>
    <property type="project" value="UniProtKB-UniRule"/>
</dbReference>
<dbReference type="Gene3D" id="4.10.830.30">
    <property type="entry name" value="Ribosomal protein L31"/>
    <property type="match status" value="1"/>
</dbReference>
<dbReference type="HAMAP" id="MF_00501">
    <property type="entry name" value="Ribosomal_bL31_1"/>
    <property type="match status" value="1"/>
</dbReference>
<dbReference type="InterPro" id="IPR034704">
    <property type="entry name" value="Ribosomal_bL28/bL31-like_sf"/>
</dbReference>
<dbReference type="InterPro" id="IPR002150">
    <property type="entry name" value="Ribosomal_bL31"/>
</dbReference>
<dbReference type="InterPro" id="IPR027491">
    <property type="entry name" value="Ribosomal_bL31_A"/>
</dbReference>
<dbReference type="InterPro" id="IPR042105">
    <property type="entry name" value="Ribosomal_bL31_sf"/>
</dbReference>
<dbReference type="NCBIfam" id="TIGR00105">
    <property type="entry name" value="L31"/>
    <property type="match status" value="1"/>
</dbReference>
<dbReference type="NCBIfam" id="NF000612">
    <property type="entry name" value="PRK00019.1"/>
    <property type="match status" value="1"/>
</dbReference>
<dbReference type="NCBIfam" id="NF001809">
    <property type="entry name" value="PRK00528.1"/>
    <property type="match status" value="1"/>
</dbReference>
<dbReference type="PANTHER" id="PTHR33280">
    <property type="entry name" value="50S RIBOSOMAL PROTEIN L31, CHLOROPLASTIC"/>
    <property type="match status" value="1"/>
</dbReference>
<dbReference type="PANTHER" id="PTHR33280:SF1">
    <property type="entry name" value="LARGE RIBOSOMAL SUBUNIT PROTEIN BL31C"/>
    <property type="match status" value="1"/>
</dbReference>
<dbReference type="Pfam" id="PF01197">
    <property type="entry name" value="Ribosomal_L31"/>
    <property type="match status" value="1"/>
</dbReference>
<dbReference type="PRINTS" id="PR01249">
    <property type="entry name" value="RIBOSOMALL31"/>
</dbReference>
<dbReference type="SUPFAM" id="SSF143800">
    <property type="entry name" value="L28p-like"/>
    <property type="match status" value="1"/>
</dbReference>
<dbReference type="PROSITE" id="PS01143">
    <property type="entry name" value="RIBOSOMAL_L31"/>
    <property type="match status" value="1"/>
</dbReference>
<feature type="chain" id="PRO_1000126752" description="Large ribosomal subunit protein bL31">
    <location>
        <begin position="1"/>
        <end position="67"/>
    </location>
</feature>
<feature type="binding site" evidence="1">
    <location>
        <position position="16"/>
    </location>
    <ligand>
        <name>Zn(2+)</name>
        <dbReference type="ChEBI" id="CHEBI:29105"/>
    </ligand>
</feature>
<feature type="binding site" evidence="1">
    <location>
        <position position="18"/>
    </location>
    <ligand>
        <name>Zn(2+)</name>
        <dbReference type="ChEBI" id="CHEBI:29105"/>
    </ligand>
</feature>
<feature type="binding site" evidence="1">
    <location>
        <position position="36"/>
    </location>
    <ligand>
        <name>Zn(2+)</name>
        <dbReference type="ChEBI" id="CHEBI:29105"/>
    </ligand>
</feature>
<feature type="binding site" evidence="1">
    <location>
        <position position="39"/>
    </location>
    <ligand>
        <name>Zn(2+)</name>
        <dbReference type="ChEBI" id="CHEBI:29105"/>
    </ligand>
</feature>